<proteinExistence type="evidence at protein level"/>
<gene>
    <name type="primary">ccdA</name>
    <name type="synonym">H</name>
    <name type="synonym">letA</name>
    <name type="ordered locus">ECOK12F042</name>
</gene>
<dbReference type="EMBL" id="X00594">
    <property type="protein sequence ID" value="CAA25243.1"/>
    <property type="molecule type" value="Genomic_DNA"/>
</dbReference>
<dbReference type="EMBL" id="M12987">
    <property type="protein sequence ID" value="AAA24898.1"/>
    <property type="molecule type" value="Genomic_DNA"/>
</dbReference>
<dbReference type="EMBL" id="AP001918">
    <property type="protein sequence ID" value="BAA97912.1"/>
    <property type="molecule type" value="Genomic_DNA"/>
</dbReference>
<dbReference type="PIR" id="T00237">
    <property type="entry name" value="T00237"/>
</dbReference>
<dbReference type="RefSeq" id="NP_061421.1">
    <property type="nucleotide sequence ID" value="NC_002483.1"/>
</dbReference>
<dbReference type="RefSeq" id="WP_000813634.1">
    <property type="nucleotide sequence ID" value="NZ_SSUU01000069.1"/>
</dbReference>
<dbReference type="RefSeq" id="YP_001816480.1">
    <property type="nucleotide sequence ID" value="NC_010558.1"/>
</dbReference>
<dbReference type="RefSeq" id="YP_003108266.1">
    <property type="nucleotide sequence ID" value="NC_013122.1"/>
</dbReference>
<dbReference type="RefSeq" id="YP_003162544.1">
    <property type="nucleotide sequence ID" value="NC_013175.1"/>
</dbReference>
<dbReference type="RefSeq" id="YP_003829105.1">
    <property type="nucleotide sequence ID" value="NC_014384.1"/>
</dbReference>
<dbReference type="RefSeq" id="YP_003829230.1">
    <property type="nucleotide sequence ID" value="NC_014385.1"/>
</dbReference>
<dbReference type="RefSeq" id="YP_006940499.1">
    <property type="nucleotide sequence ID" value="NC_019000.1"/>
</dbReference>
<dbReference type="RefSeq" id="YP_424850.1">
    <property type="nucleotide sequence ID" value="NC_007635.1"/>
</dbReference>
<dbReference type="RefSeq" id="YP_788019.1">
    <property type="nucleotide sequence ID" value="NC_008460.1"/>
</dbReference>
<dbReference type="PDB" id="2ADL">
    <property type="method" value="NMR"/>
    <property type="chains" value="A/B=1-72"/>
</dbReference>
<dbReference type="PDB" id="2ADN">
    <property type="method" value="NMR"/>
    <property type="chains" value="A/B=1-72"/>
</dbReference>
<dbReference type="PDB" id="2H3A">
    <property type="method" value="NMR"/>
    <property type="chains" value="A/B=1-72"/>
</dbReference>
<dbReference type="PDB" id="2H3C">
    <property type="method" value="NMR"/>
    <property type="chains" value="A/B=1-72"/>
</dbReference>
<dbReference type="PDB" id="3G7Z">
    <property type="method" value="X-ray"/>
    <property type="resolution" value="2.35 A"/>
    <property type="chains" value="C/D=37-72"/>
</dbReference>
<dbReference type="PDB" id="3HPW">
    <property type="method" value="X-ray"/>
    <property type="resolution" value="1.45 A"/>
    <property type="chains" value="C=37-72"/>
</dbReference>
<dbReference type="PDBsum" id="2ADL"/>
<dbReference type="PDBsum" id="2ADN"/>
<dbReference type="PDBsum" id="2H3A"/>
<dbReference type="PDBsum" id="2H3C"/>
<dbReference type="PDBsum" id="3G7Z"/>
<dbReference type="PDBsum" id="3HPW"/>
<dbReference type="EMDB" id="EMD-3568"/>
<dbReference type="EMDB" id="EMD-3569"/>
<dbReference type="SASBDB" id="P62552"/>
<dbReference type="SMR" id="P62552"/>
<dbReference type="ComplexPortal" id="CPX-5908">
    <property type="entry name" value="CcdAB toxin-antitoxin complex"/>
</dbReference>
<dbReference type="IntAct" id="P62552">
    <property type="interactions" value="2"/>
</dbReference>
<dbReference type="GeneID" id="75174184"/>
<dbReference type="KEGG" id="ecoc:C3026_24320"/>
<dbReference type="EvolutionaryTrace" id="P62552"/>
<dbReference type="PRO" id="PR:P62552"/>
<dbReference type="GO" id="GO:0110001">
    <property type="term" value="C:toxin-antitoxin complex"/>
    <property type="evidence" value="ECO:0000353"/>
    <property type="project" value="ComplexPortal"/>
</dbReference>
<dbReference type="GO" id="GO:0017053">
    <property type="term" value="C:transcription repressor complex"/>
    <property type="evidence" value="ECO:0000314"/>
    <property type="project" value="ComplexPortal"/>
</dbReference>
<dbReference type="GO" id="GO:0003677">
    <property type="term" value="F:DNA binding"/>
    <property type="evidence" value="ECO:0007669"/>
    <property type="project" value="UniProtKB-KW"/>
</dbReference>
<dbReference type="GO" id="GO:0097351">
    <property type="term" value="F:toxin sequestering activity"/>
    <property type="evidence" value="ECO:0000269"/>
    <property type="project" value="DisProt"/>
</dbReference>
<dbReference type="GO" id="GO:0045892">
    <property type="term" value="P:negative regulation of DNA-templated transcription"/>
    <property type="evidence" value="ECO:0000314"/>
    <property type="project" value="ComplexPortal"/>
</dbReference>
<dbReference type="GO" id="GO:0032984">
    <property type="term" value="P:protein-containing complex disassembly"/>
    <property type="evidence" value="ECO:0000269"/>
    <property type="project" value="DisProt"/>
</dbReference>
<dbReference type="DisProt" id="DP00928"/>
<dbReference type="Gene3D" id="1.10.1220.80">
    <property type="match status" value="1"/>
</dbReference>
<dbReference type="InterPro" id="IPR009956">
    <property type="entry name" value="Post-segregation_anti-tox_CcdA"/>
</dbReference>
<dbReference type="NCBIfam" id="NF010264">
    <property type="entry name" value="PRK13710.1"/>
    <property type="match status" value="1"/>
</dbReference>
<dbReference type="Pfam" id="PF07362">
    <property type="entry name" value="CcdA"/>
    <property type="match status" value="1"/>
</dbReference>
<feature type="chain" id="PRO_0000068383" description="Antitoxin CcdA">
    <location>
        <begin position="1"/>
        <end position="72"/>
    </location>
</feature>
<feature type="region of interest" description="Not required for antitoxin activity, or rejuvenation">
    <location>
        <begin position="1"/>
        <end position="36"/>
    </location>
</feature>
<feature type="region of interest" description="Interaction with DNA">
    <location>
        <begin position="3"/>
        <end position="40"/>
    </location>
</feature>
<feature type="region of interest" description="Interaction with CcdB">
    <location>
        <begin position="41"/>
        <end position="72"/>
    </location>
</feature>
<feature type="mutagenesis site" description="Partial loss of operon autoregulation." evidence="2">
    <original>V</original>
    <variation>H</variation>
    <location>
        <position position="22"/>
    </location>
</feature>
<feature type="mutagenesis site" description="Loss of protein stability." evidence="2">
    <location>
        <begin position="62"/>
        <end position="72"/>
    </location>
</feature>
<feature type="mutagenesis site" description="Increased protein stability." evidence="2">
    <original>R</original>
    <variation>K</variation>
    <location>
        <position position="70"/>
    </location>
</feature>
<feature type="strand" evidence="11">
    <location>
        <begin position="4"/>
        <end position="8"/>
    </location>
</feature>
<feature type="strand" evidence="11">
    <location>
        <begin position="10"/>
        <end position="12"/>
    </location>
</feature>
<feature type="helix" evidence="11">
    <location>
        <begin position="14"/>
        <end position="19"/>
    </location>
</feature>
<feature type="helix" evidence="11">
    <location>
        <begin position="25"/>
        <end position="38"/>
    </location>
</feature>
<feature type="helix" evidence="12">
    <location>
        <begin position="41"/>
        <end position="62"/>
    </location>
</feature>
<feature type="helix" evidence="12">
    <location>
        <begin position="65"/>
        <end position="69"/>
    </location>
</feature>
<name>CCDA_ECOLI</name>
<organism>
    <name type="scientific">Escherichia coli (strain K12)</name>
    <dbReference type="NCBI Taxonomy" id="83333"/>
    <lineage>
        <taxon>Bacteria</taxon>
        <taxon>Pseudomonadati</taxon>
        <taxon>Pseudomonadota</taxon>
        <taxon>Gammaproteobacteria</taxon>
        <taxon>Enterobacterales</taxon>
        <taxon>Enterobacteriaceae</taxon>
        <taxon>Escherichia</taxon>
    </lineage>
</organism>
<comment type="function">
    <text evidence="1 3 4 5 7 8 9">Antitoxin component of a type II toxin-antitoxin (TA) system which inhibits the post-segregational killing (PSK) of plasmid-free cells, also referred to as a plasmid addiction system. Labile antitoxin with a half-life of about 1 hour in the presence of CcdB. Binds to and blocks the activity of CcdB; will also remove bound CcdB protein from the CcdB-GyrA complex by forming a CcdA-CcdB complex, a process termed rejuvenation. The N-terminal 36 residues are not required for rejuventation. Functions as a transcriptional corepressor for the ccdAB operon, repression also requires CcdB.</text>
</comment>
<comment type="subunit">
    <text evidence="2 3 4 5 9">Homodimer in solution and when bound to DNA. Three CcdA homodimers bind to the promoter region and contact each other via Val-22. Forms a complex with toxin CcdB; there are both high- and low-affinity binding sites for CcdA such that both CcdA-CcdB(2) and CcdA(2)CcdB(2) complexes can form. The CcdA-CcdB(2) trimer is sufficient for rejuvenation, whereas maximal operon repression occurs with CcdA(2)CcdB(2). When the CcdA:CcdB ratio is lower than 1, a CcdA(2)-CcdB(4) complex is formed which is devoid of repression activity. In this case repression is alleviated and both proteins are produced.</text>
</comment>
<comment type="interaction">
    <interactant intactId="EBI-25647704">
        <id>P62552</id>
    </interactant>
    <interactant intactId="EBI-25647730">
        <id>P62554</id>
        <label>ccdB</label>
    </interactant>
    <organismsDiffer>false</organismsDiffer>
    <experiments>6</experiments>
</comment>
<comment type="PTM">
    <text>Degraded by the Lon protease.</text>
</comment>
<comment type="disruption phenotype">
    <text evidence="6 7">Leads to cell death and induction of the SOS pathway. Additional disruption of ccdB reverses this effect, i.e. no cell death nor induction of the SOS response. The double disruption leads to increased plasmid loss.</text>
</comment>
<comment type="similarity">
    <text evidence="10">Belongs to the CcdA antitoxin family.</text>
</comment>
<reference key="1">
    <citation type="journal article" date="1984" name="J. Mol. Biol.">
        <title>Control of cell division by sex factor F in Escherichia coli. I. The 42.84-43.6 F segment couples cell division of the host bacteria with replication of plasmid DNA.</title>
        <authorList>
            <person name="Miki T."/>
            <person name="Yoshioka K."/>
            <person name="Horiuchi T."/>
        </authorList>
    </citation>
    <scope>NUCLEOTIDE SEQUENCE [GENOMIC DNA]</scope>
    <scope>ROLE IN CELL DEATH</scope>
</reference>
<reference key="2">
    <citation type="submission" date="1986-08" db="EMBL/GenBank/DDBJ databases">
        <title>F plasmid DNA complete mini-F region (F coordinates 40.301F to 49.869F).</title>
        <authorList>
            <person name="Eichenlaub R."/>
        </authorList>
    </citation>
    <scope>NUCLEOTIDE SEQUENCE [GENOMIC DNA]</scope>
</reference>
<reference key="3">
    <citation type="submission" date="2000-04" db="EMBL/GenBank/DDBJ databases">
        <title>Complete nucleotide sequence of the F plasmid: its implications for organization and diversification of plasmid genomes.</title>
        <authorList>
            <person name="Shimizu H."/>
            <person name="Saitoh Y."/>
            <person name="Suda Y."/>
            <person name="Uehara K."/>
            <person name="Sampei G."/>
            <person name="Mizobuchi K."/>
        </authorList>
    </citation>
    <scope>NUCLEOTIDE SEQUENCE [LARGE SCALE GENOMIC DNA]</scope>
    <source>
        <strain>K12 / CR63</strain>
    </source>
</reference>
<reference key="4">
    <citation type="journal article" date="1989" name="J. Bacteriol.">
        <title>Control of the ccd operon in plasmid F.</title>
        <authorList>
            <person name="Tam J.E."/>
            <person name="Kline B.C."/>
        </authorList>
    </citation>
    <scope>PROTEIN SEQUENCE OF 1-15</scope>
    <scope>FUNCTION IN TRANSCRIPTIONAL REGULATION</scope>
    <scope>DNA-BINDING</scope>
    <scope>SUBUNIT</scope>
</reference>
<reference key="5">
    <citation type="journal article" date="1983" name="EMBO J.">
        <title>Ham22, a mini-F mutation which is lethal to host cell and promotes recA-dependent induction of lambdoid prophage.</title>
        <authorList>
            <person name="Karoui H."/>
            <person name="Bex F."/>
            <person name="Dreze P."/>
            <person name="Couturier M."/>
        </authorList>
    </citation>
    <scope>DISRUPTION PHENOTYPE</scope>
</reference>
<reference key="6">
    <citation type="journal article" date="1983" name="Proc. Natl. Acad. Sci. U.S.A.">
        <title>Mini-F plasmid genes that couple host cell division to plasmid proliferation.</title>
        <authorList>
            <person name="Ogura T."/>
            <person name="Hiraga S."/>
        </authorList>
    </citation>
    <scope>ROLE IN PLASMID MAINTENANCE</scope>
    <scope>DISRUPTION PHENOTYPE</scope>
</reference>
<reference key="7">
    <citation type="journal article" date="1989" name="Mol. Gen. Genet.">
        <title>The F plasmid ccd autorepressor is a complex of CcdA and CcdB proteins.</title>
        <authorList>
            <person name="Tam J.E."/>
            <person name="Kline B.C."/>
        </authorList>
    </citation>
    <scope>FUNCTION IN TRANSCRIPTIONAL REGULATION</scope>
    <scope>DNA-BINDING</scope>
    <scope>SUBUNIT</scope>
</reference>
<reference key="8">
    <citation type="journal article" date="1992" name="J. Mol. Biol.">
        <title>Cell killing by the F plasmid CcdB protein involves poisoning of DNA-topoisomerase II complexes.</title>
        <authorList>
            <person name="Bernard P."/>
            <person name="Couturier M."/>
        </authorList>
    </citation>
    <scope>FUNCTION AS AN ANTITOXIN</scope>
</reference>
<reference key="9">
    <citation type="journal article" date="1993" name="J. Mol. Biol.">
        <title>The F plasmid CcdB protein induces efficient ATP-dependent DNA cleavage by gyrase.</title>
        <authorList>
            <person name="Bernard P."/>
            <person name="Kezdy K.E."/>
            <person name="Van Melderen L."/>
            <person name="Steyaert J."/>
            <person name="Wyns L."/>
            <person name="Pato M.L."/>
            <person name="Higgins P.N."/>
            <person name="Couturier M."/>
        </authorList>
    </citation>
    <scope>CHARACTERIZATION OF REJUVENATION ACTIVITY</scope>
</reference>
<reference key="10">
    <citation type="journal article" date="1994" name="Mol. Microbiol.">
        <title>Lon-dependent proteolysis of CcdA is the key control for activation of CcdB in plasmid-free segregant bacteria.</title>
        <authorList>
            <person name="Van Melderen L."/>
            <person name="Bernard P."/>
            <person name="Couturier M."/>
        </authorList>
    </citation>
    <scope>CLEAVAGE BY LON PROTEASE</scope>
</reference>
<reference key="11">
    <citation type="journal article" date="1996" name="J. Mol. Biol.">
        <title>Partner switching mechanisms in inactivation and rejuvenation of Escherichia coli DNA gyrase by F plasmid proteins LetD (CcdB) and LetA (CcdA).</title>
        <authorList>
            <person name="Maki S."/>
            <person name="Takiguchi S."/>
            <person name="Horiuchi T."/>
            <person name="Sekimizu K."/>
            <person name="Miki T."/>
        </authorList>
    </citation>
    <scope>FUNCTION IN REJUVENATION</scope>
    <scope>SUBUNIT</scope>
</reference>
<reference key="12">
    <citation type="journal article" date="2001" name="Mol. Microbiol.">
        <title>The ratio between CcdA and CcdB modulates the transcriptional repression of the ccd poison-antidote system.</title>
        <authorList>
            <person name="Afif H."/>
            <person name="Allali N."/>
            <person name="Couturier M."/>
            <person name="Van Melderen L."/>
        </authorList>
    </citation>
    <scope>MODE OF TRANSCRIPTIONAL REGULATION</scope>
</reference>
<reference key="13">
    <citation type="journal article" date="2006" name="J. Mol. Biol.">
        <title>Structural basis for nucleic acid and toxin recognition of the bacterial antitoxin CcdA.</title>
        <authorList>
            <person name="Madl T."/>
            <person name="Van Melderen L."/>
            <person name="Mine N."/>
            <person name="Respondek M."/>
            <person name="Oberer M."/>
            <person name="Keller W."/>
            <person name="Khatai L."/>
            <person name="Zangger K."/>
        </authorList>
    </citation>
    <scope>STRUCTURE BY NMR FREE AND BOUND TO DNA</scope>
    <scope>SUBUNIT</scope>
    <scope>DNA-BINDING</scope>
    <scope>MUTAGENESIS OF VAL-22; ARG-70 AND 62-ASN--TRP-72</scope>
</reference>
<reference key="14">
    <citation type="journal article" date="2009" name="Mol. Cell">
        <title>Rejuvenation of CcdB-poisoned gyrase by an intrinsically disordered protein domain.</title>
        <authorList>
            <person name="De Jonge N."/>
            <person name="Garcia-Pino A."/>
            <person name="Buts L."/>
            <person name="Haesaerts S."/>
            <person name="Charlier D."/>
            <person name="Zangger K."/>
            <person name="Wyns L."/>
            <person name="De Greve H."/>
            <person name="Loris R."/>
        </authorList>
    </citation>
    <scope>X-RAY CRYSTALLOGRAPHY (1.45 ANGSTROMS) OF 37-72</scope>
    <scope>FUNCTION AS AN ANTITOXIN</scope>
    <scope>SUBUNIT</scope>
    <scope>DNA-BINDING</scope>
</reference>
<keyword id="KW-0002">3D-structure</keyword>
<keyword id="KW-0903">Direct protein sequencing</keyword>
<keyword id="KW-0238">DNA-binding</keyword>
<keyword id="KW-0614">Plasmid</keyword>
<keyword id="KW-0678">Repressor</keyword>
<keyword id="KW-1277">Toxin-antitoxin system</keyword>
<keyword id="KW-0804">Transcription</keyword>
<keyword id="KW-0805">Transcription regulation</keyword>
<accession>P62552</accession>
<accession>P05702</accession>
<geneLocation type="plasmid">
    <name>F</name>
</geneLocation>
<sequence length="72" mass="8372">MKQRITVTVDSDSYQLLKAYDVNISGLVSTTMQNEARRLRAERWKAENQEGMAEVARFIEMNGSFADENRDW</sequence>
<protein>
    <recommendedName>
        <fullName>Antitoxin CcdA</fullName>
    </recommendedName>
    <alternativeName>
        <fullName>LynA</fullName>
    </alternativeName>
    <alternativeName>
        <fullName>Protein H</fullName>
    </alternativeName>
    <alternativeName>
        <fullName>Protein LetA</fullName>
    </alternativeName>
</protein>
<evidence type="ECO:0000269" key="1">
    <source>
    </source>
</evidence>
<evidence type="ECO:0000269" key="2">
    <source>
    </source>
</evidence>
<evidence type="ECO:0000269" key="3">
    <source>
    </source>
</evidence>
<evidence type="ECO:0000269" key="4">
    <source>
    </source>
</evidence>
<evidence type="ECO:0000269" key="5">
    <source>
    </source>
</evidence>
<evidence type="ECO:0000269" key="6">
    <source>
    </source>
</evidence>
<evidence type="ECO:0000269" key="7">
    <source>
    </source>
</evidence>
<evidence type="ECO:0000269" key="8">
    <source>
    </source>
</evidence>
<evidence type="ECO:0000269" key="9">
    <source>
    </source>
</evidence>
<evidence type="ECO:0000305" key="10"/>
<evidence type="ECO:0007829" key="11">
    <source>
        <dbReference type="PDB" id="2ADL"/>
    </source>
</evidence>
<evidence type="ECO:0007829" key="12">
    <source>
        <dbReference type="PDB" id="3HPW"/>
    </source>
</evidence>